<evidence type="ECO:0000250" key="1"/>
<evidence type="ECO:0000256" key="2">
    <source>
        <dbReference type="SAM" id="MobiDB-lite"/>
    </source>
</evidence>
<evidence type="ECO:0000305" key="3"/>
<reference key="1">
    <citation type="journal article" date="2007" name="PLoS Pathog.">
        <title>Identification of a novel polyomavirus from patients with acute respiratory tract infections.</title>
        <authorList>
            <person name="Gaynor A.M."/>
            <person name="Nissen M.D."/>
            <person name="Whiley D.M."/>
            <person name="Mackay I.M."/>
            <person name="Lambert S.B."/>
            <person name="Wu G."/>
            <person name="Brennan D.C."/>
            <person name="Storch G.A."/>
            <person name="Sloots T.P."/>
            <person name="Wang D."/>
        </authorList>
    </citation>
    <scope>NUCLEOTIDE SEQUENCE [GENOMIC DNA]</scope>
    <source>
        <strain>Isolate B0</strain>
        <strain>Isolate S1</strain>
        <strain>Isolate S2</strain>
        <strain>Isolate S3</strain>
        <strain>Isolate S4</strain>
        <strain>Isolate S5</strain>
    </source>
</reference>
<reference key="2">
    <citation type="journal article" date="2009" name="Virology">
        <title>The Polyomaviridae: Contributions of virus structure to our understanding of virus receptors and infectious entry.</title>
        <authorList>
            <person name="Neu U."/>
            <person name="Stehle T."/>
            <person name="Atwood W.J."/>
        </authorList>
    </citation>
    <scope>REVIEW</scope>
</reference>
<dbReference type="EMBL" id="EF444549">
    <property type="protein sequence ID" value="ABQ09290.1"/>
    <property type="molecule type" value="Genomic_DNA"/>
</dbReference>
<dbReference type="EMBL" id="EF444549">
    <property type="protein sequence ID" value="ABQ09291.1"/>
    <property type="molecule type" value="Genomic_DNA"/>
</dbReference>
<dbReference type="EMBL" id="EF444550">
    <property type="protein sequence ID" value="ABQ09294.1"/>
    <property type="molecule type" value="Genomic_DNA"/>
</dbReference>
<dbReference type="EMBL" id="EF444550">
    <property type="protein sequence ID" value="ABQ09295.1"/>
    <property type="molecule type" value="Genomic_DNA"/>
</dbReference>
<dbReference type="EMBL" id="EF444551">
    <property type="protein sequence ID" value="ABQ09299.1"/>
    <property type="molecule type" value="Genomic_DNA"/>
</dbReference>
<dbReference type="EMBL" id="EF444551">
    <property type="protein sequence ID" value="ABQ09300.1"/>
    <property type="molecule type" value="Genomic_DNA"/>
</dbReference>
<dbReference type="EMBL" id="EF444552">
    <property type="protein sequence ID" value="ABQ09304.1"/>
    <property type="molecule type" value="Genomic_DNA"/>
</dbReference>
<dbReference type="EMBL" id="EF444552">
    <property type="protein sequence ID" value="ABQ09305.1"/>
    <property type="molecule type" value="Genomic_DNA"/>
</dbReference>
<dbReference type="EMBL" id="EF444553">
    <property type="protein sequence ID" value="ABQ09309.1"/>
    <property type="molecule type" value="Genomic_DNA"/>
</dbReference>
<dbReference type="EMBL" id="EF444553">
    <property type="protein sequence ID" value="ABQ09310.1"/>
    <property type="molecule type" value="Genomic_DNA"/>
</dbReference>
<dbReference type="EMBL" id="EF444554">
    <property type="protein sequence ID" value="ABQ09314.1"/>
    <property type="molecule type" value="Genomic_DNA"/>
</dbReference>
<dbReference type="EMBL" id="EF444554">
    <property type="protein sequence ID" value="ABQ09315.1"/>
    <property type="molecule type" value="Genomic_DNA"/>
</dbReference>
<dbReference type="RefSeq" id="YP_001285485.1">
    <property type="nucleotide sequence ID" value="NC_009539.1"/>
</dbReference>
<dbReference type="RefSeq" id="YP_001285486.1">
    <property type="nucleotide sequence ID" value="NC_009539.1"/>
</dbReference>
<dbReference type="GeneID" id="5309724"/>
<dbReference type="GeneID" id="5309725"/>
<dbReference type="KEGG" id="vg:5309724"/>
<dbReference type="KEGG" id="vg:5309725"/>
<dbReference type="OrthoDB" id="15751at10239"/>
<dbReference type="Proteomes" id="UP000096057">
    <property type="component" value="Genome"/>
</dbReference>
<dbReference type="Proteomes" id="UP000114161">
    <property type="component" value="Genome"/>
</dbReference>
<dbReference type="Proteomes" id="UP000118542">
    <property type="component" value="Genome"/>
</dbReference>
<dbReference type="Proteomes" id="UP000119623">
    <property type="component" value="Genome"/>
</dbReference>
<dbReference type="Proteomes" id="UP000148617">
    <property type="component" value="Genome"/>
</dbReference>
<dbReference type="Proteomes" id="UP000153939">
    <property type="component" value="Segment"/>
</dbReference>
<dbReference type="GO" id="GO:0043657">
    <property type="term" value="C:host cell"/>
    <property type="evidence" value="ECO:0007669"/>
    <property type="project" value="GOC"/>
</dbReference>
<dbReference type="GO" id="GO:0044167">
    <property type="term" value="C:host cell endoplasmic reticulum membrane"/>
    <property type="evidence" value="ECO:0007669"/>
    <property type="project" value="UniProtKB-SubCell"/>
</dbReference>
<dbReference type="GO" id="GO:0042025">
    <property type="term" value="C:host cell nucleus"/>
    <property type="evidence" value="ECO:0007669"/>
    <property type="project" value="UniProtKB-SubCell"/>
</dbReference>
<dbReference type="GO" id="GO:0016020">
    <property type="term" value="C:membrane"/>
    <property type="evidence" value="ECO:0007669"/>
    <property type="project" value="UniProtKB-KW"/>
</dbReference>
<dbReference type="GO" id="GO:0019028">
    <property type="term" value="C:viral capsid"/>
    <property type="evidence" value="ECO:0007669"/>
    <property type="project" value="UniProtKB-KW"/>
</dbReference>
<dbReference type="GO" id="GO:0003677">
    <property type="term" value="F:DNA binding"/>
    <property type="evidence" value="ECO:0007669"/>
    <property type="project" value="UniProtKB-KW"/>
</dbReference>
<dbReference type="GO" id="GO:0046718">
    <property type="term" value="P:symbiont entry into host cell"/>
    <property type="evidence" value="ECO:0007669"/>
    <property type="project" value="UniProtKB-KW"/>
</dbReference>
<dbReference type="GO" id="GO:0075732">
    <property type="term" value="P:viral penetration into host nucleus"/>
    <property type="evidence" value="ECO:0007669"/>
    <property type="project" value="UniProtKB-KW"/>
</dbReference>
<organismHost>
    <name type="scientific">Homo sapiens</name>
    <name type="common">Human</name>
    <dbReference type="NCBI Taxonomy" id="9606"/>
</organismHost>
<protein>
    <recommendedName>
        <fullName>Minor capsid protein VP2</fullName>
    </recommendedName>
    <alternativeName>
        <fullName>Minor structural protein VP2</fullName>
    </alternativeName>
</protein>
<name>VP2_POVWU</name>
<comment type="function">
    <molecule>Isoform VP2</molecule>
    <text evidence="1">Structural protein that resides within the core of the capsid surrounded by 72 VP1 pentamers. Participates in host cell receptor binding together with VP1. Following virus endocytosis and trafficking to the endoplasmic reticulum, VP2 and VP3 form oligomers and integrate into the endoplasmic reticulum membrane. Heterooligomer VP2-VP3 may create a viroporin for transporting the viral genome across the endoplasmic reticulum membrane to the cytoplasm. Nuclear entry of the viral DNA involves the selective exposure and importin recognition of VP2 or VP3 nuclear localization signal (shared C-terminus). Plays a role in virion assembly within the nucleus in particular through a DNA-binding domain located in the C-terminal region. A N-terminal myristoylation suggests a scaffold function for virion assembly (By similarity).</text>
</comment>
<comment type="function">
    <molecule>Isoform VP3</molecule>
    <text evidence="1">Structural protein that resides within the core of the capsid surrounded by 72 VP1 pentamers. Following virus endocytosis and trafficking to the endoplasmic reticulum, VP2 and VP3 form oligomers and integrate into the endoplasmic reticulum membrane. Heterooligomer VP2-VP3 may create a viroporin for transporting the viral genome across the endoplasmic reticulum membrane to the cytoplasm. Nuclear entry of the viral DNA involves the selective exposure and importin recognition of VP2 or VP3 nuclear localization signal (shared C-terminus). Plays a role in virion assembly within the nucleus (By similarity).</text>
</comment>
<comment type="subunit">
    <molecule>Isoform VP2</molecule>
    <text evidence="1">Forms homooligomers, and heterooligomers with VP3 in the endoplasmic reticulum membrane. Interacts (via D1 domain) with VP1.</text>
</comment>
<comment type="subunit">
    <molecule>Isoform VP3</molecule>
    <text>Interacts (via D1 domain) with VP1.</text>
</comment>
<comment type="subcellular location">
    <molecule>Isoform VP2</molecule>
    <subcellularLocation>
        <location>Virion</location>
    </subcellularLocation>
    <subcellularLocation>
        <location>Host nucleus</location>
    </subcellularLocation>
    <subcellularLocation>
        <location>Host endoplasmic reticulum</location>
    </subcellularLocation>
    <subcellularLocation>
        <location evidence="1">Host endoplasmic reticulum membrane</location>
    </subcellularLocation>
</comment>
<comment type="subcellular location">
    <molecule>Isoform VP3</molecule>
    <subcellularLocation>
        <location>Virion</location>
    </subcellularLocation>
    <subcellularLocation>
        <location>Host nucleus</location>
    </subcellularLocation>
    <subcellularLocation>
        <location>Host endoplasmic reticulum</location>
    </subcellularLocation>
    <subcellularLocation>
        <location evidence="1">Host endoplasmic reticulum membrane</location>
    </subcellularLocation>
</comment>
<comment type="alternative products">
    <event type="alternative splicing"/>
    <event type="alternative initiation"/>
    <isoform>
        <id>A5HBE1-1</id>
        <name>VP2</name>
        <name>Minor capsid protein VP2</name>
        <sequence type="displayed"/>
    </isoform>
    <isoform>
        <id>A5HBE1-2</id>
        <name>VP3</name>
        <name>Minor capsid protein VP3</name>
        <sequence type="described" ref="VSP_027107"/>
    </isoform>
    <isoform>
        <id>A5HBD5-1</id>
        <name>VP1</name>
        <sequence type="external"/>
    </isoform>
</comment>
<comment type="miscellaneous">
    <molecule>Isoform VP2</molecule>
    <text>Produced by alternative splicing of the late mRNA.</text>
</comment>
<comment type="miscellaneous">
    <molecule>Isoform VP3</molecule>
    <text evidence="3">Produced by alternative initiation at Met-144 of isoform VP2.</text>
</comment>
<comment type="similarity">
    <text evidence="3">Belongs to the polyomaviruses capsid protein VP2 family.</text>
</comment>
<accession>A5HBE1</accession>
<accession>A5HBD3</accession>
<accession>A5HBD4</accession>
<accession>A5HBE2</accession>
<accession>A5HBF8</accession>
<accession>A5HBF9</accession>
<feature type="initiator methionine" description="Removed; by host" evidence="1">
    <location>
        <position position="1"/>
    </location>
</feature>
<feature type="chain" id="PRO_0000295818" description="Minor capsid protein VP2">
    <location>
        <begin position="2"/>
        <end position="415"/>
    </location>
</feature>
<feature type="region of interest" description="Disordered" evidence="2">
    <location>
        <begin position="102"/>
        <end position="121"/>
    </location>
</feature>
<feature type="region of interest" description="D1" evidence="1">
    <location>
        <begin position="318"/>
        <end position="353"/>
    </location>
</feature>
<feature type="region of interest" description="DNA-binding" evidence="1">
    <location>
        <begin position="358"/>
        <end position="409"/>
    </location>
</feature>
<feature type="region of interest" description="Disordered" evidence="2">
    <location>
        <begin position="365"/>
        <end position="415"/>
    </location>
</feature>
<feature type="short sequence motif" description="Nuclear localization signal" evidence="1">
    <location>
        <begin position="377"/>
        <end position="384"/>
    </location>
</feature>
<feature type="compositionally biased region" description="Basic residues" evidence="2">
    <location>
        <begin position="372"/>
        <end position="415"/>
    </location>
</feature>
<feature type="lipid moiety-binding region" description="N-myristoyl glycine; by host" evidence="1">
    <location>
        <position position="2"/>
    </location>
</feature>
<feature type="splice variant" id="VSP_027107" description="In isoform VP3." evidence="3">
    <location>
        <begin position="1"/>
        <end position="143"/>
    </location>
</feature>
<feature type="sequence variant" description="In strain: Isolate B0.">
    <original>Q</original>
    <variation>E</variation>
    <location>
        <position position="250"/>
    </location>
</feature>
<feature type="sequence variant" description="In strain: Isolate S5.">
    <original>D</original>
    <variation>H</variation>
    <location>
        <position position="284"/>
    </location>
</feature>
<organism>
    <name type="scientific">WU polyomavirus</name>
    <name type="common">WUPyV</name>
    <dbReference type="NCBI Taxonomy" id="440266"/>
    <lineage>
        <taxon>Viruses</taxon>
        <taxon>Monodnaviria</taxon>
        <taxon>Shotokuvirae</taxon>
        <taxon>Cossaviricota</taxon>
        <taxon>Papovaviricetes</taxon>
        <taxon>Sepolyvirales</taxon>
        <taxon>Polyomaviridae</taxon>
        <taxon>Betapolyomavirus</taxon>
        <taxon>Betapolyomavirus quartihominis</taxon>
    </lineage>
</organism>
<sequence>MGILLAVPEIIAASVAGGAEALSIAGSGAAIATGEGLAALGGLTESAALLGETVEISEAAATVLTKVPELVTVTQGVTAAVQGGAGLVGGIYTALAADRPGDLPASTPTGSPSGLHPPAGYNPQGGGLNIQSIHKPLHAPYPGMALAPIPEYNLETGIPGVPDWVFNFIASHLPELPSLQDVFNRIAYGIWTSYYNTGRTVVNRAVSEELQRLLGDLEYGFRTALATIGESDPVNAIVEQVRSFVSGGRQRELLQIAAGQPVDISEGVSRGTATISNAVEAVRDATQRLSQATYNFVYDASTLPRDGFNALSDGVHRLGQWISMPGATGGTPHYAAPDWILYVLEELNSDISKIPTQGIKRKLQQNGLHSKASLHSKTRKVTKKSTHKSAKPSKTSQKRRGRRAGRRTTVRRNRV</sequence>
<keyword id="KW-0024">Alternative initiation</keyword>
<keyword id="KW-0025">Alternative splicing</keyword>
<keyword id="KW-0167">Capsid protein</keyword>
<keyword id="KW-0238">DNA-binding</keyword>
<keyword id="KW-1038">Host endoplasmic reticulum</keyword>
<keyword id="KW-1043">Host membrane</keyword>
<keyword id="KW-1048">Host nucleus</keyword>
<keyword id="KW-0426">Late protein</keyword>
<keyword id="KW-0449">Lipoprotein</keyword>
<keyword id="KW-0472">Membrane</keyword>
<keyword id="KW-0519">Myristate</keyword>
<keyword id="KW-1185">Reference proteome</keyword>
<keyword id="KW-1163">Viral penetration into host nucleus</keyword>
<keyword id="KW-0946">Virion</keyword>
<keyword id="KW-1160">Virus entry into host cell</keyword>
<proteinExistence type="inferred from homology"/>